<proteinExistence type="inferred from homology"/>
<feature type="chain" id="PRO_0000023189" description="Aspartate 1-decarboxylase beta chain" evidence="1">
    <location>
        <begin position="1"/>
        <end position="24"/>
    </location>
</feature>
<feature type="chain" id="PRO_0000023190" description="Aspartate 1-decarboxylase alpha chain" evidence="1">
    <location>
        <begin position="25"/>
        <end position="126"/>
    </location>
</feature>
<feature type="active site" description="Schiff-base intermediate with substrate; via pyruvic acid" evidence="1">
    <location>
        <position position="25"/>
    </location>
</feature>
<feature type="active site" description="Proton donor" evidence="1">
    <location>
        <position position="58"/>
    </location>
</feature>
<feature type="binding site" evidence="1">
    <location>
        <position position="57"/>
    </location>
    <ligand>
        <name>substrate</name>
    </ligand>
</feature>
<feature type="binding site" evidence="1">
    <location>
        <begin position="73"/>
        <end position="75"/>
    </location>
    <ligand>
        <name>substrate</name>
    </ligand>
</feature>
<feature type="modified residue" description="Pyruvic acid (Ser)" evidence="1">
    <location>
        <position position="25"/>
    </location>
</feature>
<keyword id="KW-0068">Autocatalytic cleavage</keyword>
<keyword id="KW-0963">Cytoplasm</keyword>
<keyword id="KW-0210">Decarboxylase</keyword>
<keyword id="KW-0456">Lyase</keyword>
<keyword id="KW-0566">Pantothenate biosynthesis</keyword>
<keyword id="KW-0670">Pyruvate</keyword>
<keyword id="KW-1185">Reference proteome</keyword>
<keyword id="KW-0704">Schiff base</keyword>
<keyword id="KW-0865">Zymogen</keyword>
<organism>
    <name type="scientific">Xanthomonas campestris pv. campestris (strain ATCC 33913 / DSM 3586 / NCPPB 528 / LMG 568 / P 25)</name>
    <dbReference type="NCBI Taxonomy" id="190485"/>
    <lineage>
        <taxon>Bacteria</taxon>
        <taxon>Pseudomonadati</taxon>
        <taxon>Pseudomonadota</taxon>
        <taxon>Gammaproteobacteria</taxon>
        <taxon>Lysobacterales</taxon>
        <taxon>Lysobacteraceae</taxon>
        <taxon>Xanthomonas</taxon>
    </lineage>
</organism>
<comment type="function">
    <text evidence="1">Catalyzes the pyruvoyl-dependent decarboxylation of aspartate to produce beta-alanine.</text>
</comment>
<comment type="catalytic activity">
    <reaction evidence="1">
        <text>L-aspartate + H(+) = beta-alanine + CO2</text>
        <dbReference type="Rhea" id="RHEA:19497"/>
        <dbReference type="ChEBI" id="CHEBI:15378"/>
        <dbReference type="ChEBI" id="CHEBI:16526"/>
        <dbReference type="ChEBI" id="CHEBI:29991"/>
        <dbReference type="ChEBI" id="CHEBI:57966"/>
        <dbReference type="EC" id="4.1.1.11"/>
    </reaction>
</comment>
<comment type="cofactor">
    <cofactor evidence="1">
        <name>pyruvate</name>
        <dbReference type="ChEBI" id="CHEBI:15361"/>
    </cofactor>
    <text evidence="1">Binds 1 pyruvoyl group covalently per subunit.</text>
</comment>
<comment type="pathway">
    <text evidence="1">Cofactor biosynthesis; (R)-pantothenate biosynthesis; beta-alanine from L-aspartate: step 1/1.</text>
</comment>
<comment type="subunit">
    <text evidence="1">Heterooctamer of four alpha and four beta subunits.</text>
</comment>
<comment type="subcellular location">
    <subcellularLocation>
        <location evidence="1">Cytoplasm</location>
    </subcellularLocation>
</comment>
<comment type="PTM">
    <text evidence="1">Is synthesized initially as an inactive proenzyme, which is activated by self-cleavage at a specific serine bond to produce a beta-subunit with a hydroxyl group at its C-terminus and an alpha-subunit with a pyruvoyl group at its N-terminus.</text>
</comment>
<comment type="similarity">
    <text evidence="1">Belongs to the PanD family.</text>
</comment>
<protein>
    <recommendedName>
        <fullName evidence="1">Aspartate 1-decarboxylase</fullName>
        <ecNumber evidence="1">4.1.1.11</ecNumber>
    </recommendedName>
    <alternativeName>
        <fullName evidence="1">Aspartate alpha-decarboxylase</fullName>
    </alternativeName>
    <component>
        <recommendedName>
            <fullName evidence="1">Aspartate 1-decarboxylase beta chain</fullName>
        </recommendedName>
    </component>
    <component>
        <recommendedName>
            <fullName evidence="1">Aspartate 1-decarboxylase alpha chain</fullName>
        </recommendedName>
    </component>
</protein>
<name>PAND_XANCP</name>
<reference key="1">
    <citation type="journal article" date="2002" name="Nature">
        <title>Comparison of the genomes of two Xanthomonas pathogens with differing host specificities.</title>
        <authorList>
            <person name="da Silva A.C.R."/>
            <person name="Ferro J.A."/>
            <person name="Reinach F.C."/>
            <person name="Farah C.S."/>
            <person name="Furlan L.R."/>
            <person name="Quaggio R.B."/>
            <person name="Monteiro-Vitorello C.B."/>
            <person name="Van Sluys M.A."/>
            <person name="Almeida N.F. Jr."/>
            <person name="Alves L.M.C."/>
            <person name="do Amaral A.M."/>
            <person name="Bertolini M.C."/>
            <person name="Camargo L.E.A."/>
            <person name="Camarotte G."/>
            <person name="Cannavan F."/>
            <person name="Cardozo J."/>
            <person name="Chambergo F."/>
            <person name="Ciapina L.P."/>
            <person name="Cicarelli R.M.B."/>
            <person name="Coutinho L.L."/>
            <person name="Cursino-Santos J.R."/>
            <person name="El-Dorry H."/>
            <person name="Faria J.B."/>
            <person name="Ferreira A.J.S."/>
            <person name="Ferreira R.C.C."/>
            <person name="Ferro M.I.T."/>
            <person name="Formighieri E.F."/>
            <person name="Franco M.C."/>
            <person name="Greggio C.C."/>
            <person name="Gruber A."/>
            <person name="Katsuyama A.M."/>
            <person name="Kishi L.T."/>
            <person name="Leite R.P."/>
            <person name="Lemos E.G.M."/>
            <person name="Lemos M.V.F."/>
            <person name="Locali E.C."/>
            <person name="Machado M.A."/>
            <person name="Madeira A.M.B.N."/>
            <person name="Martinez-Rossi N.M."/>
            <person name="Martins E.C."/>
            <person name="Meidanis J."/>
            <person name="Menck C.F.M."/>
            <person name="Miyaki C.Y."/>
            <person name="Moon D.H."/>
            <person name="Moreira L.M."/>
            <person name="Novo M.T.M."/>
            <person name="Okura V.K."/>
            <person name="Oliveira M.C."/>
            <person name="Oliveira V.R."/>
            <person name="Pereira H.A."/>
            <person name="Rossi A."/>
            <person name="Sena J.A.D."/>
            <person name="Silva C."/>
            <person name="de Souza R.F."/>
            <person name="Spinola L.A.F."/>
            <person name="Takita M.A."/>
            <person name="Tamura R.E."/>
            <person name="Teixeira E.C."/>
            <person name="Tezza R.I.D."/>
            <person name="Trindade dos Santos M."/>
            <person name="Truffi D."/>
            <person name="Tsai S.M."/>
            <person name="White F.F."/>
            <person name="Setubal J.C."/>
            <person name="Kitajima J.P."/>
        </authorList>
    </citation>
    <scope>NUCLEOTIDE SEQUENCE [LARGE SCALE GENOMIC DNA]</scope>
    <source>
        <strain>ATCC 33913 / DSM 3586 / NCPPB 528 / LMG 568 / P 25</strain>
    </source>
</reference>
<gene>
    <name evidence="1" type="primary">panD</name>
    <name type="ordered locus">XCC1770</name>
</gene>
<evidence type="ECO:0000255" key="1">
    <source>
        <dbReference type="HAMAP-Rule" id="MF_00446"/>
    </source>
</evidence>
<dbReference type="EC" id="4.1.1.11" evidence="1"/>
<dbReference type="EMBL" id="AE008922">
    <property type="protein sequence ID" value="AAM41060.1"/>
    <property type="molecule type" value="Genomic_DNA"/>
</dbReference>
<dbReference type="RefSeq" id="NP_637136.1">
    <property type="nucleotide sequence ID" value="NC_003902.1"/>
</dbReference>
<dbReference type="RefSeq" id="WP_011036943.1">
    <property type="nucleotide sequence ID" value="NC_003902.1"/>
</dbReference>
<dbReference type="SMR" id="Q8P9S8"/>
<dbReference type="STRING" id="190485.XCC1770"/>
<dbReference type="EnsemblBacteria" id="AAM41060">
    <property type="protein sequence ID" value="AAM41060"/>
    <property type="gene ID" value="XCC1770"/>
</dbReference>
<dbReference type="KEGG" id="xcc:XCC1770"/>
<dbReference type="PATRIC" id="fig|190485.4.peg.1886"/>
<dbReference type="eggNOG" id="COG0853">
    <property type="taxonomic scope" value="Bacteria"/>
</dbReference>
<dbReference type="HOGENOM" id="CLU_115305_2_1_6"/>
<dbReference type="OrthoDB" id="9803983at2"/>
<dbReference type="UniPathway" id="UPA00028">
    <property type="reaction ID" value="UER00002"/>
</dbReference>
<dbReference type="Proteomes" id="UP000001010">
    <property type="component" value="Chromosome"/>
</dbReference>
<dbReference type="GO" id="GO:0005829">
    <property type="term" value="C:cytosol"/>
    <property type="evidence" value="ECO:0000318"/>
    <property type="project" value="GO_Central"/>
</dbReference>
<dbReference type="GO" id="GO:0004068">
    <property type="term" value="F:aspartate 1-decarboxylase activity"/>
    <property type="evidence" value="ECO:0000318"/>
    <property type="project" value="GO_Central"/>
</dbReference>
<dbReference type="GO" id="GO:0006523">
    <property type="term" value="P:alanine biosynthetic process"/>
    <property type="evidence" value="ECO:0000318"/>
    <property type="project" value="GO_Central"/>
</dbReference>
<dbReference type="GO" id="GO:0015940">
    <property type="term" value="P:pantothenate biosynthetic process"/>
    <property type="evidence" value="ECO:0000318"/>
    <property type="project" value="GO_Central"/>
</dbReference>
<dbReference type="CDD" id="cd06919">
    <property type="entry name" value="Asp_decarbox"/>
    <property type="match status" value="1"/>
</dbReference>
<dbReference type="Gene3D" id="2.40.40.20">
    <property type="match status" value="1"/>
</dbReference>
<dbReference type="HAMAP" id="MF_00446">
    <property type="entry name" value="PanD"/>
    <property type="match status" value="1"/>
</dbReference>
<dbReference type="InterPro" id="IPR009010">
    <property type="entry name" value="Asp_de-COase-like_dom_sf"/>
</dbReference>
<dbReference type="InterPro" id="IPR003190">
    <property type="entry name" value="Asp_decarbox"/>
</dbReference>
<dbReference type="NCBIfam" id="TIGR00223">
    <property type="entry name" value="panD"/>
    <property type="match status" value="1"/>
</dbReference>
<dbReference type="PANTHER" id="PTHR21012">
    <property type="entry name" value="ASPARTATE 1-DECARBOXYLASE"/>
    <property type="match status" value="1"/>
</dbReference>
<dbReference type="PANTHER" id="PTHR21012:SF0">
    <property type="entry name" value="ASPARTATE 1-DECARBOXYLASE"/>
    <property type="match status" value="1"/>
</dbReference>
<dbReference type="Pfam" id="PF02261">
    <property type="entry name" value="Asp_decarbox"/>
    <property type="match status" value="1"/>
</dbReference>
<dbReference type="PIRSF" id="PIRSF006246">
    <property type="entry name" value="Asp_decarbox"/>
    <property type="match status" value="1"/>
</dbReference>
<dbReference type="SUPFAM" id="SSF50692">
    <property type="entry name" value="ADC-like"/>
    <property type="match status" value="1"/>
</dbReference>
<sequence>MHLSLLKAKIHRATVTHSELNYEGSIAIDGLLLEATGIREFEQVHIWDVTNGARFSTYAIRAEQGSGIISLNGGAARHVQVGDLIIVAAFASMSEDQAKTFKPNLVYVDAHNAISHTNHSIPTQAA</sequence>
<accession>Q8P9S8</accession>